<feature type="signal peptide" evidence="3">
    <location>
        <begin position="1"/>
        <end position="20"/>
    </location>
</feature>
<feature type="propeptide" id="PRO_0000028977" evidence="1">
    <location>
        <begin position="21"/>
        <end position="191"/>
    </location>
</feature>
<feature type="chain" id="PRO_0000028978" description="Zinc metalloproteinase-disintegrin jerdonitin">
    <location>
        <begin position="192"/>
        <end position="484"/>
    </location>
</feature>
<feature type="domain" description="Peptidase M12B" evidence="5">
    <location>
        <begin position="194"/>
        <end position="392"/>
    </location>
</feature>
<feature type="domain" description="Disintegrin" evidence="4">
    <location>
        <begin position="400"/>
        <end position="484"/>
    </location>
</feature>
<feature type="short sequence motif" description="Cell attachment site">
    <location>
        <begin position="462"/>
        <end position="464"/>
    </location>
</feature>
<feature type="active site" evidence="2 5">
    <location>
        <position position="331"/>
    </location>
</feature>
<feature type="binding site" evidence="1">
    <location>
        <position position="197"/>
    </location>
    <ligand>
        <name>Ca(2+)</name>
        <dbReference type="ChEBI" id="CHEBI:29108"/>
        <label>1</label>
    </ligand>
</feature>
<feature type="binding site" evidence="1">
    <location>
        <position position="281"/>
    </location>
    <ligand>
        <name>Ca(2+)</name>
        <dbReference type="ChEBI" id="CHEBI:29108"/>
        <label>1</label>
    </ligand>
</feature>
<feature type="binding site" evidence="5">
    <location>
        <position position="330"/>
    </location>
    <ligand>
        <name>Zn(2+)</name>
        <dbReference type="ChEBI" id="CHEBI:29105"/>
        <note>catalytic</note>
    </ligand>
</feature>
<feature type="binding site" evidence="5">
    <location>
        <position position="334"/>
    </location>
    <ligand>
        <name>Zn(2+)</name>
        <dbReference type="ChEBI" id="CHEBI:29105"/>
        <note>catalytic</note>
    </ligand>
</feature>
<feature type="binding site" evidence="5">
    <location>
        <position position="340"/>
    </location>
    <ligand>
        <name>Zn(2+)</name>
        <dbReference type="ChEBI" id="CHEBI:29105"/>
        <note>catalytic</note>
    </ligand>
</feature>
<feature type="binding site" evidence="1">
    <location>
        <position position="387"/>
    </location>
    <ligand>
        <name>Ca(2+)</name>
        <dbReference type="ChEBI" id="CHEBI:29108"/>
        <label>1</label>
    </ligand>
</feature>
<feature type="binding site" evidence="1">
    <location>
        <position position="390"/>
    </location>
    <ligand>
        <name>Ca(2+)</name>
        <dbReference type="ChEBI" id="CHEBI:29108"/>
        <label>1</label>
    </ligand>
</feature>
<feature type="binding site" evidence="1">
    <location>
        <position position="402"/>
    </location>
    <ligand>
        <name>Ca(2+)</name>
        <dbReference type="ChEBI" id="CHEBI:29108"/>
        <label>2</label>
    </ligand>
</feature>
<feature type="binding site" evidence="1">
    <location>
        <position position="405"/>
    </location>
    <ligand>
        <name>Ca(2+)</name>
        <dbReference type="ChEBI" id="CHEBI:29108"/>
        <label>2</label>
    </ligand>
</feature>
<feature type="binding site" evidence="1">
    <location>
        <position position="409"/>
    </location>
    <ligand>
        <name>Ca(2+)</name>
        <dbReference type="ChEBI" id="CHEBI:29108"/>
        <label>2</label>
    </ligand>
</feature>
<feature type="binding site" evidence="1">
    <location>
        <position position="412"/>
    </location>
    <ligand>
        <name>Ca(2+)</name>
        <dbReference type="ChEBI" id="CHEBI:29108"/>
        <label>2</label>
    </ligand>
</feature>
<feature type="binding site" evidence="1">
    <location>
        <position position="415"/>
    </location>
    <ligand>
        <name>Ca(2+)</name>
        <dbReference type="ChEBI" id="CHEBI:29108"/>
        <label>2</label>
    </ligand>
</feature>
<feature type="modified residue" description="Pyrrolidone carboxylic acid" evidence="13">
    <location>
        <position position="192"/>
    </location>
</feature>
<feature type="disulfide bond" evidence="5">
    <location>
        <begin position="305"/>
        <end position="387"/>
    </location>
</feature>
<feature type="disulfide bond" evidence="5">
    <location>
        <begin position="345"/>
        <end position="369"/>
    </location>
</feature>
<feature type="disulfide bond" evidence="5">
    <location>
        <begin position="347"/>
        <end position="352"/>
    </location>
</feature>
<feature type="disulfide bond" evidence="13">
    <location>
        <begin position="403"/>
        <end position="422"/>
    </location>
</feature>
<feature type="disulfide bond" evidence="2">
    <location>
        <begin position="414"/>
        <end position="432"/>
    </location>
</feature>
<feature type="disulfide bond" evidence="2">
    <location>
        <begin position="416"/>
        <end position="427"/>
    </location>
</feature>
<feature type="disulfide bond" evidence="2">
    <location>
        <begin position="426"/>
        <end position="449"/>
    </location>
</feature>
<feature type="disulfide bond" evidence="2">
    <location>
        <begin position="440"/>
        <end position="446"/>
    </location>
</feature>
<feature type="disulfide bond" evidence="2">
    <location>
        <begin position="445"/>
        <end position="470"/>
    </location>
</feature>
<feature type="disulfide bond" evidence="2 4">
    <location>
        <begin position="458"/>
        <end position="477"/>
    </location>
</feature>
<accession>P83912</accession>
<name>VM2JT_PROJR</name>
<sequence>MIQVLLVTICLAVFPYQGSSIILESGNIDDYEVVYPRKVTALPKGAVQQKYEDTMQYEFKVNEEPVVLHLEKNKGLFSKDYSETHYSPDGREITTYPPVEDHCYYHGRIQNDADSTASISACNGLKGHFKLQGETYFIEPLKLPDSEAHAVFKYENVEKEDEAPKMCGVTETNWESDEPIKKLSQIMIPPEQQRYIELVIVADHRMYTKYDGDKTEISSKIYETANNLNEIYRHLKIHVVLIGLEMWSSGELSKVTLSADETLDSFGEWRERDLLQRKRHDNAQLLTGMIFNEKIEGRAYKESMCDPKRSVGIVRDHRTRPHLVANRMAHELGHNLGFHHDGDSCTCGANSCIMSATVSNEPSSRFSDCSLFQYSSDIIHNPFTSRCLYNEPSKTDIVSPSVCGNYYMEVGEDCDCGPPANCQNPCCDAATCRLTPGSQCADGLCCDQCRFMKKGTICRIARGDDLDDYCNGISAGCPRNPFHA</sequence>
<dbReference type="EC" id="3.4.24.-"/>
<dbReference type="EMBL" id="AY364231">
    <property type="protein sequence ID" value="AAQ63966.1"/>
    <property type="molecule type" value="mRNA"/>
</dbReference>
<dbReference type="SMR" id="P83912"/>
<dbReference type="MEROPS" id="M12.313"/>
<dbReference type="GO" id="GO:0005576">
    <property type="term" value="C:extracellular region"/>
    <property type="evidence" value="ECO:0007669"/>
    <property type="project" value="UniProtKB-SubCell"/>
</dbReference>
<dbReference type="GO" id="GO:0005886">
    <property type="term" value="C:plasma membrane"/>
    <property type="evidence" value="ECO:0007669"/>
    <property type="project" value="TreeGrafter"/>
</dbReference>
<dbReference type="GO" id="GO:0046872">
    <property type="term" value="F:metal ion binding"/>
    <property type="evidence" value="ECO:0007669"/>
    <property type="project" value="UniProtKB-KW"/>
</dbReference>
<dbReference type="GO" id="GO:0004222">
    <property type="term" value="F:metalloendopeptidase activity"/>
    <property type="evidence" value="ECO:0007669"/>
    <property type="project" value="InterPro"/>
</dbReference>
<dbReference type="GO" id="GO:0090729">
    <property type="term" value="F:toxin activity"/>
    <property type="evidence" value="ECO:0007669"/>
    <property type="project" value="UniProtKB-KW"/>
</dbReference>
<dbReference type="GO" id="GO:0006508">
    <property type="term" value="P:proteolysis"/>
    <property type="evidence" value="ECO:0007669"/>
    <property type="project" value="UniProtKB-KW"/>
</dbReference>
<dbReference type="CDD" id="cd04269">
    <property type="entry name" value="ZnMc_adamalysin_II_like"/>
    <property type="match status" value="1"/>
</dbReference>
<dbReference type="FunFam" id="3.40.390.10:FF:000002">
    <property type="entry name" value="Disintegrin and metalloproteinase domain-containing protein 22"/>
    <property type="match status" value="1"/>
</dbReference>
<dbReference type="FunFam" id="4.10.70.10:FF:000001">
    <property type="entry name" value="Disintegrin and metalloproteinase domain-containing protein 22"/>
    <property type="match status" value="1"/>
</dbReference>
<dbReference type="Gene3D" id="3.40.390.10">
    <property type="entry name" value="Collagenase (Catalytic Domain)"/>
    <property type="match status" value="1"/>
</dbReference>
<dbReference type="Gene3D" id="4.10.70.10">
    <property type="entry name" value="Disintegrin domain"/>
    <property type="match status" value="1"/>
</dbReference>
<dbReference type="InterPro" id="IPR018358">
    <property type="entry name" value="Disintegrin_CS"/>
</dbReference>
<dbReference type="InterPro" id="IPR001762">
    <property type="entry name" value="Disintegrin_dom"/>
</dbReference>
<dbReference type="InterPro" id="IPR036436">
    <property type="entry name" value="Disintegrin_dom_sf"/>
</dbReference>
<dbReference type="InterPro" id="IPR024079">
    <property type="entry name" value="MetalloPept_cat_dom_sf"/>
</dbReference>
<dbReference type="InterPro" id="IPR001590">
    <property type="entry name" value="Peptidase_M12B"/>
</dbReference>
<dbReference type="InterPro" id="IPR002870">
    <property type="entry name" value="Peptidase_M12B_N"/>
</dbReference>
<dbReference type="InterPro" id="IPR034027">
    <property type="entry name" value="Reprolysin_adamalysin"/>
</dbReference>
<dbReference type="PANTHER" id="PTHR11905">
    <property type="entry name" value="ADAM A DISINTEGRIN AND METALLOPROTEASE DOMAIN"/>
    <property type="match status" value="1"/>
</dbReference>
<dbReference type="PANTHER" id="PTHR11905:SF32">
    <property type="entry name" value="DISINTEGRIN AND METALLOPROTEINASE DOMAIN-CONTAINING PROTEIN 28"/>
    <property type="match status" value="1"/>
</dbReference>
<dbReference type="Pfam" id="PF00200">
    <property type="entry name" value="Disintegrin"/>
    <property type="match status" value="1"/>
</dbReference>
<dbReference type="Pfam" id="PF01562">
    <property type="entry name" value="Pep_M12B_propep"/>
    <property type="match status" value="1"/>
</dbReference>
<dbReference type="Pfam" id="PF01421">
    <property type="entry name" value="Reprolysin"/>
    <property type="match status" value="1"/>
</dbReference>
<dbReference type="PRINTS" id="PR00289">
    <property type="entry name" value="DISINTEGRIN"/>
</dbReference>
<dbReference type="SMART" id="SM00050">
    <property type="entry name" value="DISIN"/>
    <property type="match status" value="1"/>
</dbReference>
<dbReference type="SUPFAM" id="SSF57552">
    <property type="entry name" value="Blood coagulation inhibitor (disintegrin)"/>
    <property type="match status" value="1"/>
</dbReference>
<dbReference type="SUPFAM" id="SSF55486">
    <property type="entry name" value="Metalloproteases ('zincins'), catalytic domain"/>
    <property type="match status" value="1"/>
</dbReference>
<dbReference type="PROSITE" id="PS50215">
    <property type="entry name" value="ADAM_MEPRO"/>
    <property type="match status" value="1"/>
</dbReference>
<dbReference type="PROSITE" id="PS00427">
    <property type="entry name" value="DISINTEGRIN_1"/>
    <property type="match status" value="1"/>
</dbReference>
<dbReference type="PROSITE" id="PS50214">
    <property type="entry name" value="DISINTEGRIN_2"/>
    <property type="match status" value="1"/>
</dbReference>
<reference key="1">
    <citation type="journal article" date="2003" name="Biochem. Biophys. Res. Commun.">
        <title>A new protein structure of P-II class snake venom metalloproteinases: it comprises metalloproteinase and disintegrin domains.</title>
        <authorList>
            <person name="Chen R.-Q."/>
            <person name="Jin Y."/>
            <person name="Wu J.-B."/>
            <person name="Zhou X.-D."/>
            <person name="Lu Q.-M."/>
            <person name="Wang W.-Y."/>
            <person name="Xiong Y.-L."/>
        </authorList>
    </citation>
    <scope>NUCLEOTIDE SEQUENCE [MRNA]</scope>
    <scope>PROTEIN SEQUENCE OF 206-214; 221-233; 299-308; 310-344; 451-453 AND 460-484</scope>
    <scope>FUNCTION</scope>
    <scope>PYROGLUTAMATE FORMATION AT GLN-192</scope>
    <scope>SUBCELLULAR LOCATION</scope>
    <source>
        <tissue>Venom</tissue>
        <tissue>Venom gland</tissue>
    </source>
</reference>
<reference key="2">
    <citation type="journal article" date="2005" name="Dong Wu Xue Yan Jiu">
        <title>Purification and characterization of jerdonitin, a non-hemorrhagic metalloproteinase from Trimeresurus jerdonii venom.</title>
        <authorList>
            <person name="Chen R.-Q."/>
            <person name="Jin Y."/>
            <person name="Wu J.-B."/>
            <person name="Zhong S.R."/>
            <person name="Zhu S.W."/>
            <person name="Lu Q.-M."/>
            <person name="Wang W.-Y."/>
            <person name="Xiong Y.-L."/>
        </authorList>
    </citation>
    <scope>FUNCTION</scope>
    <scope>ACTIVITY REGULATION</scope>
    <source>
        <tissue>Venom</tissue>
    </source>
</reference>
<reference key="3">
    <citation type="journal article" date="2010" name="Toxicon">
        <title>Expression, purification and characterization of recombinant Jerdonitin, a P-II class snake venom metalloproteinase comprising metalloproteinase and disintegrin domains.</title>
        <authorList>
            <person name="Zhu L."/>
            <person name="Yuan C."/>
            <person name="Chen Z."/>
            <person name="Wang W."/>
            <person name="Huang M."/>
        </authorList>
    </citation>
    <scope>FUNCTION</scope>
    <scope>RECOMBINANT EXPRESSION</scope>
</reference>
<keyword id="KW-0106">Calcium</keyword>
<keyword id="KW-1217">Cell adhesion impairing toxin</keyword>
<keyword id="KW-0903">Direct protein sequencing</keyword>
<keyword id="KW-1015">Disulfide bond</keyword>
<keyword id="KW-1206">Fibrinogenolytic toxin</keyword>
<keyword id="KW-1199">Hemostasis impairing toxin</keyword>
<keyword id="KW-0378">Hydrolase</keyword>
<keyword id="KW-0479">Metal-binding</keyword>
<keyword id="KW-0482">Metalloprotease</keyword>
<keyword id="KW-1201">Platelet aggregation inhibiting toxin</keyword>
<keyword id="KW-0645">Protease</keyword>
<keyword id="KW-0873">Pyrrolidone carboxylic acid</keyword>
<keyword id="KW-0964">Secreted</keyword>
<keyword id="KW-0732">Signal</keyword>
<keyword id="KW-0800">Toxin</keyword>
<keyword id="KW-0862">Zinc</keyword>
<keyword id="KW-0865">Zymogen</keyword>
<organism>
    <name type="scientific">Protobothrops jerdonii</name>
    <name type="common">Jerdon's pitviper</name>
    <name type="synonym">Trimeresurus jerdonii</name>
    <dbReference type="NCBI Taxonomy" id="242841"/>
    <lineage>
        <taxon>Eukaryota</taxon>
        <taxon>Metazoa</taxon>
        <taxon>Chordata</taxon>
        <taxon>Craniata</taxon>
        <taxon>Vertebrata</taxon>
        <taxon>Euteleostomi</taxon>
        <taxon>Lepidosauria</taxon>
        <taxon>Squamata</taxon>
        <taxon>Bifurcata</taxon>
        <taxon>Unidentata</taxon>
        <taxon>Episquamata</taxon>
        <taxon>Toxicofera</taxon>
        <taxon>Serpentes</taxon>
        <taxon>Colubroidea</taxon>
        <taxon>Viperidae</taxon>
        <taxon>Crotalinae</taxon>
        <taxon>Protobothrops</taxon>
    </lineage>
</organism>
<comment type="function">
    <text evidence="6 7 8">Snake venom zinc metalloproteinase that inhibits ADP-induced human platelet aggregation (IC(50)=120 nM (native) and IC(50)=248 nM (recombinant)). May act by binding to the receptor GPIIb/GPIIIa (ITGA2B/ITGB3) on the platelet surface (PubMed:14511668). Degrades the alpha-chain of fibrinogen completely and the beta-chain partially, leaving the gamma chain intact (Ref.2). Also inhibits the growth of several cell lines, including human liver cancer cells (Bel7402), human leukemia cells (K562) and human gastric carcinoma cells (BGC823) (PubMed:19732785).</text>
</comment>
<comment type="cofactor">
    <cofactor evidence="1">
        <name>Zn(2+)</name>
        <dbReference type="ChEBI" id="CHEBI:29105"/>
    </cofactor>
    <text evidence="1">Binds 1 zinc ion per subunit.</text>
</comment>
<comment type="activity regulation">
    <text evidence="8">Fibrinogenolytic activity is completely inhibited by EDTA, but not by PMSF.</text>
</comment>
<comment type="subunit">
    <text evidence="1">Monomer.</text>
</comment>
<comment type="subcellular location">
    <subcellularLocation>
        <location evidence="6">Secreted</location>
    </subcellularLocation>
</comment>
<comment type="tissue specificity">
    <text evidence="13">Expressed by the venom gland.</text>
</comment>
<comment type="PTM">
    <text evidence="6">The N-terminus is blocked.</text>
</comment>
<comment type="miscellaneous">
    <text>Negative results: does not show hemorrhagic activities after intradermal injection in mice. Does not show pro-coagulant and anti-coagulant activities (Ref.2).</text>
</comment>
<comment type="miscellaneous">
    <text evidence="12">The disintegrin domain belongs to the long disintegrin subfamily.</text>
</comment>
<comment type="similarity">
    <text evidence="12">Belongs to the venom metalloproteinase (M12B) family. P-II subfamily. P-IIb sub-subfamily.</text>
</comment>
<protein>
    <recommendedName>
        <fullName evidence="9 10 11">Zinc metalloproteinase-disintegrin jerdonitin</fullName>
        <ecNumber>3.4.24.-</ecNumber>
    </recommendedName>
    <alternativeName>
        <fullName>Snake venom metalloproteinase</fullName>
        <shortName>SVMP</shortName>
    </alternativeName>
</protein>
<proteinExistence type="evidence at protein level"/>
<evidence type="ECO:0000250" key="1"/>
<evidence type="ECO:0000250" key="2">
    <source>
        <dbReference type="UniProtKB" id="P18619"/>
    </source>
</evidence>
<evidence type="ECO:0000255" key="3"/>
<evidence type="ECO:0000255" key="4">
    <source>
        <dbReference type="PROSITE-ProRule" id="PRU00068"/>
    </source>
</evidence>
<evidence type="ECO:0000255" key="5">
    <source>
        <dbReference type="PROSITE-ProRule" id="PRU00276"/>
    </source>
</evidence>
<evidence type="ECO:0000269" key="6">
    <source>
    </source>
</evidence>
<evidence type="ECO:0000269" key="7">
    <source>
    </source>
</evidence>
<evidence type="ECO:0000269" key="8">
    <source ref="2"/>
</evidence>
<evidence type="ECO:0000303" key="9">
    <source>
    </source>
</evidence>
<evidence type="ECO:0000303" key="10">
    <source>
    </source>
</evidence>
<evidence type="ECO:0000303" key="11">
    <source ref="2"/>
</evidence>
<evidence type="ECO:0000305" key="12"/>
<evidence type="ECO:0000305" key="13">
    <source>
    </source>
</evidence>